<proteinExistence type="inferred from homology"/>
<feature type="chain" id="PRO_1000149447" description="Putative D-alanyl-D-alanine carboxypeptidase">
    <location>
        <begin position="1"/>
        <end position="432"/>
    </location>
</feature>
<feature type="transmembrane region" description="Helical; Signal-anchor" evidence="1">
    <location>
        <begin position="7"/>
        <end position="25"/>
    </location>
</feature>
<keyword id="KW-0121">Carboxypeptidase</keyword>
<keyword id="KW-0997">Cell inner membrane</keyword>
<keyword id="KW-1003">Cell membrane</keyword>
<keyword id="KW-0378">Hydrolase</keyword>
<keyword id="KW-0472">Membrane</keyword>
<keyword id="KW-0645">Protease</keyword>
<keyword id="KW-0812">Transmembrane</keyword>
<keyword id="KW-1133">Transmembrane helix</keyword>
<accession>B5BB26</accession>
<name>YFEW_SALPK</name>
<evidence type="ECO:0000255" key="1">
    <source>
        <dbReference type="HAMAP-Rule" id="MF_01034"/>
    </source>
</evidence>
<dbReference type="EC" id="3.4.16.4" evidence="1"/>
<dbReference type="EMBL" id="FM200053">
    <property type="protein sequence ID" value="CAR58489.1"/>
    <property type="molecule type" value="Genomic_DNA"/>
</dbReference>
<dbReference type="SMR" id="B5BB26"/>
<dbReference type="MEROPS" id="S12.A03"/>
<dbReference type="KEGG" id="sek:SSPA0365"/>
<dbReference type="HOGENOM" id="CLU_020027_1_2_6"/>
<dbReference type="Proteomes" id="UP000001869">
    <property type="component" value="Chromosome"/>
</dbReference>
<dbReference type="GO" id="GO:0005886">
    <property type="term" value="C:plasma membrane"/>
    <property type="evidence" value="ECO:0007669"/>
    <property type="project" value="UniProtKB-SubCell"/>
</dbReference>
<dbReference type="GO" id="GO:0009002">
    <property type="term" value="F:serine-type D-Ala-D-Ala carboxypeptidase activity"/>
    <property type="evidence" value="ECO:0007669"/>
    <property type="project" value="UniProtKB-UniRule"/>
</dbReference>
<dbReference type="GO" id="GO:0006508">
    <property type="term" value="P:proteolysis"/>
    <property type="evidence" value="ECO:0007669"/>
    <property type="project" value="UniProtKB-KW"/>
</dbReference>
<dbReference type="Gene3D" id="3.40.710.10">
    <property type="entry name" value="DD-peptidase/beta-lactamase superfamily"/>
    <property type="match status" value="1"/>
</dbReference>
<dbReference type="HAMAP" id="MF_01034">
    <property type="entry name" value="S12_YfeW"/>
    <property type="match status" value="1"/>
</dbReference>
<dbReference type="InterPro" id="IPR001466">
    <property type="entry name" value="Beta-lactam-related"/>
</dbReference>
<dbReference type="InterPro" id="IPR012338">
    <property type="entry name" value="Beta-lactam/transpept-like"/>
</dbReference>
<dbReference type="InterPro" id="IPR050789">
    <property type="entry name" value="Diverse_Enzym_Activities"/>
</dbReference>
<dbReference type="InterPro" id="IPR022849">
    <property type="entry name" value="Pept_S12_YfeW/YbbE-like"/>
</dbReference>
<dbReference type="NCBIfam" id="NF002968">
    <property type="entry name" value="PRK03642.1"/>
    <property type="match status" value="1"/>
</dbReference>
<dbReference type="PANTHER" id="PTHR43283">
    <property type="entry name" value="BETA-LACTAMASE-RELATED"/>
    <property type="match status" value="1"/>
</dbReference>
<dbReference type="PANTHER" id="PTHR43283:SF11">
    <property type="entry name" value="BETA-LACTAMASE-RELATED DOMAIN-CONTAINING PROTEIN"/>
    <property type="match status" value="1"/>
</dbReference>
<dbReference type="Pfam" id="PF00144">
    <property type="entry name" value="Beta-lactamase"/>
    <property type="match status" value="1"/>
</dbReference>
<dbReference type="SUPFAM" id="SSF56601">
    <property type="entry name" value="beta-lactamase/transpeptidase-like"/>
    <property type="match status" value="1"/>
</dbReference>
<comment type="catalytic activity">
    <reaction evidence="1">
        <text>Preferential cleavage: (Ac)2-L-Lys-D-Ala-|-D-Ala. Also transpeptidation of peptidyl-alanyl moieties that are N-acyl substituents of D-alanine.</text>
        <dbReference type="EC" id="3.4.16.4"/>
    </reaction>
</comment>
<comment type="subcellular location">
    <subcellularLocation>
        <location evidence="1">Cell inner membrane</location>
        <topology evidence="1">Single-pass membrane protein</topology>
    </subcellularLocation>
</comment>
<comment type="similarity">
    <text evidence="1">Belongs to the peptidase S12 family. YfeW subfamily.</text>
</comment>
<reference key="1">
    <citation type="journal article" date="2009" name="BMC Genomics">
        <title>Pseudogene accumulation in the evolutionary histories of Salmonella enterica serovars Paratyphi A and Typhi.</title>
        <authorList>
            <person name="Holt K.E."/>
            <person name="Thomson N.R."/>
            <person name="Wain J."/>
            <person name="Langridge G.C."/>
            <person name="Hasan R."/>
            <person name="Bhutta Z.A."/>
            <person name="Quail M.A."/>
            <person name="Norbertczak H."/>
            <person name="Walker D."/>
            <person name="Simmonds M."/>
            <person name="White B."/>
            <person name="Bason N."/>
            <person name="Mungall K."/>
            <person name="Dougan G."/>
            <person name="Parkhill J."/>
        </authorList>
    </citation>
    <scope>NUCLEOTIDE SEQUENCE [LARGE SCALE GENOMIC DNA]</scope>
    <source>
        <strain>AKU_12601</strain>
    </source>
</reference>
<gene>
    <name evidence="1" type="primary">yfeW</name>
    <name type="ordered locus">SSPA0365</name>
</gene>
<sequence length="432" mass="47650">MKFTLVATVLLTFSLSAFAVEYPVLTTASPDQVGFDSQKLHRLDGWIQNQIDAGYPSINLLVIKDNHIVLQKAWGYAKKYDGSTLLAHPIRATTNTMYDLASNTKMYATNFALQKLVYEGKIDVNDLVSKYIPGVKDMPGDKIKGKDKLRIIDILHHVAGFPADPQYPNKNVAGKLFSQSKSTTLEMIKKTPLEYQPGSKHIYSDVDYMILGFIIESITAMPLDRYVETTIYKPLGLKHTVFNPLMKGFTPPQIAATELHGNTRDGVIHFPNIRTNTLWGQVHDEKAWYSMGGVSGHAGLFSDTHDMAVLMQVMLNGGGYGNVKLFDDKTVAQFTRRSPEDATFGLGWRVNGNASMTPTFGVLASPQTYGHTGWTGTLTSIDPVNHMAIVILGNRPHSPVANPKVNPNVFVSGLLPAATYGWIVDQIYGSLK</sequence>
<organism>
    <name type="scientific">Salmonella paratyphi A (strain AKU_12601)</name>
    <dbReference type="NCBI Taxonomy" id="554290"/>
    <lineage>
        <taxon>Bacteria</taxon>
        <taxon>Pseudomonadati</taxon>
        <taxon>Pseudomonadota</taxon>
        <taxon>Gammaproteobacteria</taxon>
        <taxon>Enterobacterales</taxon>
        <taxon>Enterobacteriaceae</taxon>
        <taxon>Salmonella</taxon>
    </lineage>
</organism>
<protein>
    <recommendedName>
        <fullName evidence="1">Putative D-alanyl-D-alanine carboxypeptidase</fullName>
        <ecNumber evidence="1">3.4.16.4</ecNumber>
    </recommendedName>
    <alternativeName>
        <fullName evidence="1">DD-carboxypeptidase</fullName>
        <shortName evidence="1">DD-CPase</shortName>
    </alternativeName>
</protein>